<evidence type="ECO:0000255" key="1">
    <source>
        <dbReference type="HAMAP-Rule" id="MF_01631"/>
    </source>
</evidence>
<gene>
    <name evidence="1" type="primary">glmU</name>
    <name type="ordered locus">HP_0683</name>
</gene>
<name>GLMU_HELPY</name>
<proteinExistence type="inferred from homology"/>
<accession>O25393</accession>
<keyword id="KW-0012">Acyltransferase</keyword>
<keyword id="KW-0133">Cell shape</keyword>
<keyword id="KW-0961">Cell wall biogenesis/degradation</keyword>
<keyword id="KW-0963">Cytoplasm</keyword>
<keyword id="KW-0460">Magnesium</keyword>
<keyword id="KW-0479">Metal-binding</keyword>
<keyword id="KW-0511">Multifunctional enzyme</keyword>
<keyword id="KW-0548">Nucleotidyltransferase</keyword>
<keyword id="KW-0573">Peptidoglycan synthesis</keyword>
<keyword id="KW-1185">Reference proteome</keyword>
<keyword id="KW-0677">Repeat</keyword>
<keyword id="KW-0808">Transferase</keyword>
<reference key="1">
    <citation type="journal article" date="1997" name="Nature">
        <title>The complete genome sequence of the gastric pathogen Helicobacter pylori.</title>
        <authorList>
            <person name="Tomb J.-F."/>
            <person name="White O."/>
            <person name="Kerlavage A.R."/>
            <person name="Clayton R.A."/>
            <person name="Sutton G.G."/>
            <person name="Fleischmann R.D."/>
            <person name="Ketchum K.A."/>
            <person name="Klenk H.-P."/>
            <person name="Gill S.R."/>
            <person name="Dougherty B.A."/>
            <person name="Nelson K.E."/>
            <person name="Quackenbush J."/>
            <person name="Zhou L."/>
            <person name="Kirkness E.F."/>
            <person name="Peterson S.N."/>
            <person name="Loftus B.J."/>
            <person name="Richardson D.L."/>
            <person name="Dodson R.J."/>
            <person name="Khalak H.G."/>
            <person name="Glodek A."/>
            <person name="McKenney K."/>
            <person name="FitzGerald L.M."/>
            <person name="Lee N."/>
            <person name="Adams M.D."/>
            <person name="Hickey E.K."/>
            <person name="Berg D.E."/>
            <person name="Gocayne J.D."/>
            <person name="Utterback T.R."/>
            <person name="Peterson J.D."/>
            <person name="Kelley J.M."/>
            <person name="Cotton M.D."/>
            <person name="Weidman J.F."/>
            <person name="Fujii C."/>
            <person name="Bowman C."/>
            <person name="Watthey L."/>
            <person name="Wallin E."/>
            <person name="Hayes W.S."/>
            <person name="Borodovsky M."/>
            <person name="Karp P.D."/>
            <person name="Smith H.O."/>
            <person name="Fraser C.M."/>
            <person name="Venter J.C."/>
        </authorList>
    </citation>
    <scope>NUCLEOTIDE SEQUENCE [LARGE SCALE GENOMIC DNA]</scope>
    <source>
        <strain>ATCC 700392 / 26695</strain>
    </source>
</reference>
<protein>
    <recommendedName>
        <fullName evidence="1">Bifunctional protein GlmU</fullName>
    </recommendedName>
    <domain>
        <recommendedName>
            <fullName evidence="1">UDP-N-acetylglucosamine pyrophosphorylase</fullName>
            <ecNumber evidence="1">2.7.7.23</ecNumber>
        </recommendedName>
        <alternativeName>
            <fullName evidence="1">N-acetylglucosamine-1-phosphate uridyltransferase</fullName>
        </alternativeName>
    </domain>
    <domain>
        <recommendedName>
            <fullName evidence="1">Glucosamine-1-phosphate N-acetyltransferase</fullName>
            <ecNumber evidence="1">2.3.1.157</ecNumber>
        </recommendedName>
    </domain>
</protein>
<organism>
    <name type="scientific">Helicobacter pylori (strain ATCC 700392 / 26695)</name>
    <name type="common">Campylobacter pylori</name>
    <dbReference type="NCBI Taxonomy" id="85962"/>
    <lineage>
        <taxon>Bacteria</taxon>
        <taxon>Pseudomonadati</taxon>
        <taxon>Campylobacterota</taxon>
        <taxon>Epsilonproteobacteria</taxon>
        <taxon>Campylobacterales</taxon>
        <taxon>Helicobacteraceae</taxon>
        <taxon>Helicobacter</taxon>
    </lineage>
</organism>
<dbReference type="EC" id="2.7.7.23" evidence="1"/>
<dbReference type="EC" id="2.3.1.157" evidence="1"/>
<dbReference type="EMBL" id="AE000511">
    <property type="protein sequence ID" value="AAD14885.1"/>
    <property type="molecule type" value="Genomic_DNA"/>
</dbReference>
<dbReference type="PIR" id="C64605">
    <property type="entry name" value="C64605"/>
</dbReference>
<dbReference type="RefSeq" id="NP_207477.1">
    <property type="nucleotide sequence ID" value="NC_000915.1"/>
</dbReference>
<dbReference type="RefSeq" id="WP_001862579.1">
    <property type="nucleotide sequence ID" value="NC_018939.1"/>
</dbReference>
<dbReference type="SMR" id="O25393"/>
<dbReference type="FunCoup" id="O25393">
    <property type="interactions" value="341"/>
</dbReference>
<dbReference type="STRING" id="85962.HP_0683"/>
<dbReference type="PaxDb" id="85962-C694_03520"/>
<dbReference type="EnsemblBacteria" id="AAD14885">
    <property type="protein sequence ID" value="AAD14885"/>
    <property type="gene ID" value="HP_0683"/>
</dbReference>
<dbReference type="KEGG" id="heo:C694_03520"/>
<dbReference type="KEGG" id="hpy:HP_0683"/>
<dbReference type="PATRIC" id="fig|85962.47.peg.731"/>
<dbReference type="eggNOG" id="COG1207">
    <property type="taxonomic scope" value="Bacteria"/>
</dbReference>
<dbReference type="InParanoid" id="O25393"/>
<dbReference type="OrthoDB" id="9775031at2"/>
<dbReference type="PhylomeDB" id="O25393"/>
<dbReference type="UniPathway" id="UPA00113">
    <property type="reaction ID" value="UER00532"/>
</dbReference>
<dbReference type="UniPathway" id="UPA00113">
    <property type="reaction ID" value="UER00533"/>
</dbReference>
<dbReference type="UniPathway" id="UPA00973"/>
<dbReference type="Proteomes" id="UP000000429">
    <property type="component" value="Chromosome"/>
</dbReference>
<dbReference type="GO" id="GO:0005737">
    <property type="term" value="C:cytoplasm"/>
    <property type="evidence" value="ECO:0007669"/>
    <property type="project" value="UniProtKB-SubCell"/>
</dbReference>
<dbReference type="GO" id="GO:0016020">
    <property type="term" value="C:membrane"/>
    <property type="evidence" value="ECO:0007669"/>
    <property type="project" value="GOC"/>
</dbReference>
<dbReference type="GO" id="GO:0019134">
    <property type="term" value="F:glucosamine-1-phosphate N-acetyltransferase activity"/>
    <property type="evidence" value="ECO:0007669"/>
    <property type="project" value="UniProtKB-UniRule"/>
</dbReference>
<dbReference type="GO" id="GO:0000287">
    <property type="term" value="F:magnesium ion binding"/>
    <property type="evidence" value="ECO:0007669"/>
    <property type="project" value="UniProtKB-UniRule"/>
</dbReference>
<dbReference type="GO" id="GO:0003977">
    <property type="term" value="F:UDP-N-acetylglucosamine diphosphorylase activity"/>
    <property type="evidence" value="ECO:0007669"/>
    <property type="project" value="UniProtKB-UniRule"/>
</dbReference>
<dbReference type="GO" id="GO:0000902">
    <property type="term" value="P:cell morphogenesis"/>
    <property type="evidence" value="ECO:0007669"/>
    <property type="project" value="UniProtKB-UniRule"/>
</dbReference>
<dbReference type="GO" id="GO:0071555">
    <property type="term" value="P:cell wall organization"/>
    <property type="evidence" value="ECO:0007669"/>
    <property type="project" value="UniProtKB-KW"/>
</dbReference>
<dbReference type="GO" id="GO:0009245">
    <property type="term" value="P:lipid A biosynthetic process"/>
    <property type="evidence" value="ECO:0007669"/>
    <property type="project" value="UniProtKB-UniRule"/>
</dbReference>
<dbReference type="GO" id="GO:0009252">
    <property type="term" value="P:peptidoglycan biosynthetic process"/>
    <property type="evidence" value="ECO:0007669"/>
    <property type="project" value="UniProtKB-UniRule"/>
</dbReference>
<dbReference type="GO" id="GO:0008360">
    <property type="term" value="P:regulation of cell shape"/>
    <property type="evidence" value="ECO:0007669"/>
    <property type="project" value="UniProtKB-KW"/>
</dbReference>
<dbReference type="GO" id="GO:0006048">
    <property type="term" value="P:UDP-N-acetylglucosamine biosynthetic process"/>
    <property type="evidence" value="ECO:0007669"/>
    <property type="project" value="UniProtKB-UniPathway"/>
</dbReference>
<dbReference type="CDD" id="cd02540">
    <property type="entry name" value="GT2_GlmU_N_bac"/>
    <property type="match status" value="1"/>
</dbReference>
<dbReference type="CDD" id="cd03353">
    <property type="entry name" value="LbH_GlmU_C"/>
    <property type="match status" value="1"/>
</dbReference>
<dbReference type="Gene3D" id="2.160.10.10">
    <property type="entry name" value="Hexapeptide repeat proteins"/>
    <property type="match status" value="1"/>
</dbReference>
<dbReference type="Gene3D" id="3.90.550.10">
    <property type="entry name" value="Spore Coat Polysaccharide Biosynthesis Protein SpsA, Chain A"/>
    <property type="match status" value="1"/>
</dbReference>
<dbReference type="HAMAP" id="MF_01631">
    <property type="entry name" value="GlmU"/>
    <property type="match status" value="1"/>
</dbReference>
<dbReference type="InterPro" id="IPR005882">
    <property type="entry name" value="Bifunctional_GlmU"/>
</dbReference>
<dbReference type="InterPro" id="IPR050065">
    <property type="entry name" value="GlmU-like"/>
</dbReference>
<dbReference type="InterPro" id="IPR038009">
    <property type="entry name" value="GlmU_C_LbH"/>
</dbReference>
<dbReference type="InterPro" id="IPR001451">
    <property type="entry name" value="Hexapep"/>
</dbReference>
<dbReference type="InterPro" id="IPR018357">
    <property type="entry name" value="Hexapep_transf_CS"/>
</dbReference>
<dbReference type="InterPro" id="IPR025877">
    <property type="entry name" value="MobA-like_NTP_Trfase"/>
</dbReference>
<dbReference type="InterPro" id="IPR029044">
    <property type="entry name" value="Nucleotide-diphossugar_trans"/>
</dbReference>
<dbReference type="InterPro" id="IPR011004">
    <property type="entry name" value="Trimer_LpxA-like_sf"/>
</dbReference>
<dbReference type="NCBIfam" id="TIGR01173">
    <property type="entry name" value="glmU"/>
    <property type="match status" value="1"/>
</dbReference>
<dbReference type="NCBIfam" id="NF010939">
    <property type="entry name" value="PRK14359.1"/>
    <property type="match status" value="1"/>
</dbReference>
<dbReference type="PANTHER" id="PTHR43584:SF3">
    <property type="entry name" value="BIFUNCTIONAL PROTEIN GLMU"/>
    <property type="match status" value="1"/>
</dbReference>
<dbReference type="PANTHER" id="PTHR43584">
    <property type="entry name" value="NUCLEOTIDYL TRANSFERASE"/>
    <property type="match status" value="1"/>
</dbReference>
<dbReference type="Pfam" id="PF00132">
    <property type="entry name" value="Hexapep"/>
    <property type="match status" value="1"/>
</dbReference>
<dbReference type="Pfam" id="PF12804">
    <property type="entry name" value="NTP_transf_3"/>
    <property type="match status" value="1"/>
</dbReference>
<dbReference type="SUPFAM" id="SSF53448">
    <property type="entry name" value="Nucleotide-diphospho-sugar transferases"/>
    <property type="match status" value="1"/>
</dbReference>
<dbReference type="SUPFAM" id="SSF51161">
    <property type="entry name" value="Trimeric LpxA-like enzymes"/>
    <property type="match status" value="1"/>
</dbReference>
<dbReference type="PROSITE" id="PS00101">
    <property type="entry name" value="HEXAPEP_TRANSFERASES"/>
    <property type="match status" value="1"/>
</dbReference>
<sequence length="433" mass="47803">MLSVIILAAGKGTRMRSSLPKTLHTICGEPMLFYILETAFSISDDVHLILHHQQERIKEAVLERFKGVIFHTQIVEKYSGTGGAIMQKDKTPISTKHERVLILNADMPLITKDALAPLLESKNNAIGLLHLADPKGYGRVVLENHQVKKIVEEKDANDEEKEIKSVNAGVYGFERDFLEKYLPKLHDQNAQKEYYLTDLIALGINENETIDAIFLKEECFLGVNSQTERAKAEEIMLERLRKNAMDLGVVMQLPNSIYLEKGVSFKGECVLEQGVRLIGNCLIENAHIKAYSVIEESQIVNSSVGPFAHARPKSVICNSHVGNFVETKNAKLQGTKAGHLSYLGDCEIGKNTNVGAGVITCNYDGKKKHQTIIGENVFIGSDSQLVAPINIGSNVLIGSGTTITKDIPSGSLSLSRAPQTNIENGYFKFFKKP</sequence>
<feature type="chain" id="PRO_0000233782" description="Bifunctional protein GlmU">
    <location>
        <begin position="1"/>
        <end position="433"/>
    </location>
</feature>
<feature type="region of interest" description="Pyrophosphorylase" evidence="1">
    <location>
        <begin position="1"/>
        <end position="226"/>
    </location>
</feature>
<feature type="region of interest" description="Linker" evidence="1">
    <location>
        <begin position="227"/>
        <end position="247"/>
    </location>
</feature>
<feature type="region of interest" description="N-acetyltransferase" evidence="1">
    <location>
        <begin position="248"/>
        <end position="433"/>
    </location>
</feature>
<feature type="active site" description="Proton acceptor" evidence="1">
    <location>
        <position position="339"/>
    </location>
</feature>
<feature type="binding site" evidence="1">
    <location>
        <begin position="7"/>
        <end position="10"/>
    </location>
    <ligand>
        <name>UDP-N-acetyl-alpha-D-glucosamine</name>
        <dbReference type="ChEBI" id="CHEBI:57705"/>
    </ligand>
</feature>
<feature type="binding site" evidence="1">
    <location>
        <position position="21"/>
    </location>
    <ligand>
        <name>UDP-N-acetyl-alpha-D-glucosamine</name>
        <dbReference type="ChEBI" id="CHEBI:57705"/>
    </ligand>
</feature>
<feature type="binding site" evidence="1">
    <location>
        <begin position="80"/>
        <end position="81"/>
    </location>
    <ligand>
        <name>UDP-N-acetyl-alpha-D-glucosamine</name>
        <dbReference type="ChEBI" id="CHEBI:57705"/>
    </ligand>
</feature>
<feature type="binding site" evidence="1">
    <location>
        <position position="106"/>
    </location>
    <ligand>
        <name>Mg(2+)</name>
        <dbReference type="ChEBI" id="CHEBI:18420"/>
    </ligand>
</feature>
<feature type="binding site" evidence="1">
    <location>
        <position position="138"/>
    </location>
    <ligand>
        <name>UDP-N-acetyl-alpha-D-glucosamine</name>
        <dbReference type="ChEBI" id="CHEBI:57705"/>
    </ligand>
</feature>
<feature type="binding site" evidence="1">
    <location>
        <position position="152"/>
    </location>
    <ligand>
        <name>UDP-N-acetyl-alpha-D-glucosamine</name>
        <dbReference type="ChEBI" id="CHEBI:57705"/>
    </ligand>
</feature>
<feature type="binding site" evidence="1">
    <location>
        <position position="167"/>
    </location>
    <ligand>
        <name>UDP-N-acetyl-alpha-D-glucosamine</name>
        <dbReference type="ChEBI" id="CHEBI:57705"/>
    </ligand>
</feature>
<feature type="binding site" evidence="1">
    <location>
        <position position="224"/>
    </location>
    <ligand>
        <name>Mg(2+)</name>
        <dbReference type="ChEBI" id="CHEBI:18420"/>
    </ligand>
</feature>
<feature type="binding site" evidence="1">
    <location>
        <position position="224"/>
    </location>
    <ligand>
        <name>UDP-N-acetyl-alpha-D-glucosamine</name>
        <dbReference type="ChEBI" id="CHEBI:57705"/>
    </ligand>
</feature>
<feature type="binding site" evidence="1">
    <location>
        <position position="311"/>
    </location>
    <ligand>
        <name>UDP-N-acetyl-alpha-D-glucosamine</name>
        <dbReference type="ChEBI" id="CHEBI:57705"/>
    </ligand>
</feature>
<feature type="binding site" evidence="1">
    <location>
        <position position="328"/>
    </location>
    <ligand>
        <name>UDP-N-acetyl-alpha-D-glucosamine</name>
        <dbReference type="ChEBI" id="CHEBI:57705"/>
    </ligand>
</feature>
<feature type="binding site" evidence="1">
    <location>
        <position position="342"/>
    </location>
    <ligand>
        <name>UDP-N-acetyl-alpha-D-glucosamine</name>
        <dbReference type="ChEBI" id="CHEBI:57705"/>
    </ligand>
</feature>
<feature type="binding site" evidence="1">
    <location>
        <position position="353"/>
    </location>
    <ligand>
        <name>UDP-N-acetyl-alpha-D-glucosamine</name>
        <dbReference type="ChEBI" id="CHEBI:57705"/>
    </ligand>
</feature>
<feature type="binding site" evidence="1">
    <location>
        <position position="356"/>
    </location>
    <ligand>
        <name>acetyl-CoA</name>
        <dbReference type="ChEBI" id="CHEBI:57288"/>
    </ligand>
</feature>
<feature type="binding site" evidence="1">
    <location>
        <begin position="362"/>
        <end position="363"/>
    </location>
    <ligand>
        <name>acetyl-CoA</name>
        <dbReference type="ChEBI" id="CHEBI:57288"/>
    </ligand>
</feature>
<feature type="binding site" evidence="1">
    <location>
        <position position="381"/>
    </location>
    <ligand>
        <name>acetyl-CoA</name>
        <dbReference type="ChEBI" id="CHEBI:57288"/>
    </ligand>
</feature>
<feature type="binding site" evidence="1">
    <location>
        <position position="399"/>
    </location>
    <ligand>
        <name>acetyl-CoA</name>
        <dbReference type="ChEBI" id="CHEBI:57288"/>
    </ligand>
</feature>
<feature type="binding site" evidence="1">
    <location>
        <position position="416"/>
    </location>
    <ligand>
        <name>acetyl-CoA</name>
        <dbReference type="ChEBI" id="CHEBI:57288"/>
    </ligand>
</feature>
<comment type="function">
    <text evidence="1">Catalyzes the last two sequential reactions in the de novo biosynthetic pathway for UDP-N-acetylglucosamine (UDP-GlcNAc). The C-terminal domain catalyzes the transfer of acetyl group from acetyl coenzyme A to glucosamine-1-phosphate (GlcN-1-P) to produce N-acetylglucosamine-1-phosphate (GlcNAc-1-P), which is converted into UDP-GlcNAc by the transfer of uridine 5-monophosphate (from uridine 5-triphosphate), a reaction catalyzed by the N-terminal domain.</text>
</comment>
<comment type="catalytic activity">
    <reaction evidence="1">
        <text>alpha-D-glucosamine 1-phosphate + acetyl-CoA = N-acetyl-alpha-D-glucosamine 1-phosphate + CoA + H(+)</text>
        <dbReference type="Rhea" id="RHEA:13725"/>
        <dbReference type="ChEBI" id="CHEBI:15378"/>
        <dbReference type="ChEBI" id="CHEBI:57287"/>
        <dbReference type="ChEBI" id="CHEBI:57288"/>
        <dbReference type="ChEBI" id="CHEBI:57776"/>
        <dbReference type="ChEBI" id="CHEBI:58516"/>
        <dbReference type="EC" id="2.3.1.157"/>
    </reaction>
</comment>
<comment type="catalytic activity">
    <reaction evidence="1">
        <text>N-acetyl-alpha-D-glucosamine 1-phosphate + UTP + H(+) = UDP-N-acetyl-alpha-D-glucosamine + diphosphate</text>
        <dbReference type="Rhea" id="RHEA:13509"/>
        <dbReference type="ChEBI" id="CHEBI:15378"/>
        <dbReference type="ChEBI" id="CHEBI:33019"/>
        <dbReference type="ChEBI" id="CHEBI:46398"/>
        <dbReference type="ChEBI" id="CHEBI:57705"/>
        <dbReference type="ChEBI" id="CHEBI:57776"/>
        <dbReference type="EC" id="2.7.7.23"/>
    </reaction>
</comment>
<comment type="cofactor">
    <cofactor evidence="1">
        <name>Mg(2+)</name>
        <dbReference type="ChEBI" id="CHEBI:18420"/>
    </cofactor>
    <text evidence="1">Binds 1 Mg(2+) ion per subunit.</text>
</comment>
<comment type="pathway">
    <text evidence="1">Nucleotide-sugar biosynthesis; UDP-N-acetyl-alpha-D-glucosamine biosynthesis; N-acetyl-alpha-D-glucosamine 1-phosphate from alpha-D-glucosamine 6-phosphate (route II): step 2/2.</text>
</comment>
<comment type="pathway">
    <text evidence="1">Nucleotide-sugar biosynthesis; UDP-N-acetyl-alpha-D-glucosamine biosynthesis; UDP-N-acetyl-alpha-D-glucosamine from N-acetyl-alpha-D-glucosamine 1-phosphate: step 1/1.</text>
</comment>
<comment type="pathway">
    <text evidence="1">Bacterial outer membrane biogenesis; LPS lipid A biosynthesis.</text>
</comment>
<comment type="subunit">
    <text evidence="1">Homotrimer.</text>
</comment>
<comment type="subcellular location">
    <subcellularLocation>
        <location evidence="1">Cytoplasm</location>
    </subcellularLocation>
</comment>
<comment type="similarity">
    <text evidence="1">In the N-terminal section; belongs to the N-acetylglucosamine-1-phosphate uridyltransferase family.</text>
</comment>
<comment type="similarity">
    <text evidence="1">In the C-terminal section; belongs to the transferase hexapeptide repeat family.</text>
</comment>